<evidence type="ECO:0000250" key="1"/>
<evidence type="ECO:0000255" key="2">
    <source>
        <dbReference type="PROSITE-ProRule" id="PRU01020"/>
    </source>
</evidence>
<evidence type="ECO:0000305" key="3"/>
<sequence length="359" mass="39433">MDSTNQNLTQTEDEAFLFAMQLASASVLPMVLKSALELDLLEIMAKAGPGAAISPSELAAQLPTKNPEAPVMLDRMLRLLATYSVLNCTLRTLPDGRVERLYSLAPVCKLLTKNADGVSVAPLLLMNQDKVLMESWYHLTDAVLDGGVPFNKAYGMTAFEYHGTDPRFNKVFNRGMSDHSTMTMKKILEDYKGFEGLNSIVDVGGGTGATVNMIVSKYPSIKGINFDLSHVIEDAPAYPGVEHVGRDMFVSVPKADAIFMKWICHDWSDEHCLKFLKNCYEALPANGKVLVAECILPETPDTSAATKNAVHVDIVMLAHNPGGKERTEKEFEALAKGAGFTGFRRACCAYQTWVMEFHK</sequence>
<protein>
    <recommendedName>
        <fullName>Caffeic acid 3-O-methyltransferase</fullName>
        <shortName>CAOMT</shortName>
        <shortName>COMT</shortName>
        <ecNumber>2.1.1.68</ecNumber>
    </recommendedName>
    <alternativeName>
        <fullName>S-adenosysl-L-methionine:caffeic acid 3-O-methyltransferase</fullName>
    </alternativeName>
</protein>
<comment type="function">
    <text>Catalyzes the conversion of caffeic acid to ferulic acid and of 5-hydroxyferulic acid to sinapic acid. The resulting products may subsequently be converted to the corresponding alcohols that are incorporated into lignins.</text>
</comment>
<comment type="catalytic activity">
    <reaction>
        <text>(E)-caffeate + S-adenosyl-L-methionine = (E)-ferulate + S-adenosyl-L-homocysteine + H(+)</text>
        <dbReference type="Rhea" id="RHEA:20225"/>
        <dbReference type="ChEBI" id="CHEBI:15378"/>
        <dbReference type="ChEBI" id="CHEBI:29749"/>
        <dbReference type="ChEBI" id="CHEBI:57770"/>
        <dbReference type="ChEBI" id="CHEBI:57856"/>
        <dbReference type="ChEBI" id="CHEBI:59789"/>
        <dbReference type="EC" id="2.1.1.68"/>
    </reaction>
</comment>
<comment type="pathway">
    <text>Aromatic compound metabolism; phenylpropanoid biosynthesis.</text>
</comment>
<comment type="subunit">
    <text evidence="1">Homodimer.</text>
</comment>
<comment type="tissue specificity">
    <text>Fruit. Not expressed in leaf.</text>
</comment>
<comment type="developmental stage">
    <text>Expression increases during fruit development but decreases during ripening.</text>
</comment>
<comment type="similarity">
    <text evidence="2">Belongs to the class I-like SAM-binding methyltransferase superfamily. Cation-independent O-methyltransferase family. COMT subfamily.</text>
</comment>
<reference key="1">
    <citation type="journal article" date="1998" name="J. Plant Biol.">
        <title>Isolation and characterization of o-diphenol-O-methyltransferase cDNA clone in hot pepper (Capsicum annuum L.).</title>
        <authorList>
            <person name="Lee B.-H."/>
            <person name="Choi D."/>
            <person name="Lee K.-W."/>
        </authorList>
    </citation>
    <scope>NUCLEOTIDE SEQUENCE [MRNA]</scope>
    <source>
        <tissue>Pericarp</tissue>
    </source>
</reference>
<reference key="2">
    <citation type="submission" date="1999-12" db="EMBL/GenBank/DDBJ databases">
        <title>Isolation and characterization of caffeic acid O-methyltransferase cDNA from Capsicum annuum.</title>
        <authorList>
            <person name="Kim K.-W."/>
            <person name="Lee S.-W."/>
        </authorList>
    </citation>
    <scope>NUCLEOTIDE SEQUENCE [MRNA]</scope>
    <source>
        <strain>cv. Chungyang</strain>
        <tissue>Root</tissue>
    </source>
</reference>
<organism>
    <name type="scientific">Capsicum annuum</name>
    <name type="common">Capsicum pepper</name>
    <dbReference type="NCBI Taxonomy" id="4072"/>
    <lineage>
        <taxon>Eukaryota</taxon>
        <taxon>Viridiplantae</taxon>
        <taxon>Streptophyta</taxon>
        <taxon>Embryophyta</taxon>
        <taxon>Tracheophyta</taxon>
        <taxon>Spermatophyta</taxon>
        <taxon>Magnoliopsida</taxon>
        <taxon>eudicotyledons</taxon>
        <taxon>Gunneridae</taxon>
        <taxon>Pentapetalae</taxon>
        <taxon>asterids</taxon>
        <taxon>lamiids</taxon>
        <taxon>Solanales</taxon>
        <taxon>Solanaceae</taxon>
        <taxon>Solanoideae</taxon>
        <taxon>Capsiceae</taxon>
        <taxon>Capsicum</taxon>
    </lineage>
</organism>
<accession>Q9FQY8</accession>
<accession>P93088</accession>
<name>COMT1_CAPAN</name>
<gene>
    <name type="primary">COMT</name>
</gene>
<dbReference type="EC" id="2.1.1.68"/>
<dbReference type="EMBL" id="U83789">
    <property type="protein sequence ID" value="AAC17455.1"/>
    <property type="molecule type" value="mRNA"/>
</dbReference>
<dbReference type="EMBL" id="AF212316">
    <property type="protein sequence ID" value="AAG43822.1"/>
    <property type="molecule type" value="mRNA"/>
</dbReference>
<dbReference type="PIR" id="T12259">
    <property type="entry name" value="T12259"/>
</dbReference>
<dbReference type="RefSeq" id="NP_001311774.1">
    <property type="nucleotide sequence ID" value="NM_001324845.1"/>
</dbReference>
<dbReference type="SMR" id="Q9FQY8"/>
<dbReference type="GeneID" id="107862991"/>
<dbReference type="KEGG" id="cann:107862991"/>
<dbReference type="OrthoDB" id="1606438at2759"/>
<dbReference type="UniPathway" id="UPA00711"/>
<dbReference type="GO" id="GO:0047763">
    <property type="term" value="F:caffeate O-methyltransferase activity"/>
    <property type="evidence" value="ECO:0007669"/>
    <property type="project" value="UniProtKB-EC"/>
</dbReference>
<dbReference type="GO" id="GO:0046983">
    <property type="term" value="F:protein dimerization activity"/>
    <property type="evidence" value="ECO:0007669"/>
    <property type="project" value="InterPro"/>
</dbReference>
<dbReference type="GO" id="GO:0009813">
    <property type="term" value="P:flavonoid biosynthetic process"/>
    <property type="evidence" value="ECO:0007669"/>
    <property type="project" value="UniProtKB-ARBA"/>
</dbReference>
<dbReference type="GO" id="GO:0009809">
    <property type="term" value="P:lignin biosynthetic process"/>
    <property type="evidence" value="ECO:0007669"/>
    <property type="project" value="UniProtKB-KW"/>
</dbReference>
<dbReference type="GO" id="GO:0032259">
    <property type="term" value="P:methylation"/>
    <property type="evidence" value="ECO:0007669"/>
    <property type="project" value="UniProtKB-KW"/>
</dbReference>
<dbReference type="CDD" id="cd02440">
    <property type="entry name" value="AdoMet_MTases"/>
    <property type="match status" value="1"/>
</dbReference>
<dbReference type="FunFam" id="1.10.10.10:FF:000357">
    <property type="entry name" value="Caffeic acid 3-O-methyltransferase"/>
    <property type="match status" value="1"/>
</dbReference>
<dbReference type="FunFam" id="3.40.50.150:FF:000061">
    <property type="entry name" value="Caffeic acid O-methyltransferase"/>
    <property type="match status" value="1"/>
</dbReference>
<dbReference type="Gene3D" id="3.40.50.150">
    <property type="entry name" value="Vaccinia Virus protein VP39"/>
    <property type="match status" value="1"/>
</dbReference>
<dbReference type="Gene3D" id="1.10.10.10">
    <property type="entry name" value="Winged helix-like DNA-binding domain superfamily/Winged helix DNA-binding domain"/>
    <property type="match status" value="1"/>
</dbReference>
<dbReference type="InterPro" id="IPR016461">
    <property type="entry name" value="COMT-like"/>
</dbReference>
<dbReference type="InterPro" id="IPR001077">
    <property type="entry name" value="O_MeTrfase_dom"/>
</dbReference>
<dbReference type="InterPro" id="IPR012967">
    <property type="entry name" value="Plant_O-MeTrfase_dimerisation"/>
</dbReference>
<dbReference type="InterPro" id="IPR029063">
    <property type="entry name" value="SAM-dependent_MTases_sf"/>
</dbReference>
<dbReference type="InterPro" id="IPR036388">
    <property type="entry name" value="WH-like_DNA-bd_sf"/>
</dbReference>
<dbReference type="InterPro" id="IPR036390">
    <property type="entry name" value="WH_DNA-bd_sf"/>
</dbReference>
<dbReference type="PANTHER" id="PTHR11746">
    <property type="entry name" value="O-METHYLTRANSFERASE"/>
    <property type="match status" value="1"/>
</dbReference>
<dbReference type="Pfam" id="PF08100">
    <property type="entry name" value="Dimerisation"/>
    <property type="match status" value="1"/>
</dbReference>
<dbReference type="Pfam" id="PF00891">
    <property type="entry name" value="Methyltransf_2"/>
    <property type="match status" value="1"/>
</dbReference>
<dbReference type="PIRSF" id="PIRSF005739">
    <property type="entry name" value="O-mtase"/>
    <property type="match status" value="1"/>
</dbReference>
<dbReference type="SUPFAM" id="SSF53335">
    <property type="entry name" value="S-adenosyl-L-methionine-dependent methyltransferases"/>
    <property type="match status" value="1"/>
</dbReference>
<dbReference type="SUPFAM" id="SSF46785">
    <property type="entry name" value="Winged helix' DNA-binding domain"/>
    <property type="match status" value="1"/>
</dbReference>
<dbReference type="PROSITE" id="PS51683">
    <property type="entry name" value="SAM_OMT_II"/>
    <property type="match status" value="1"/>
</dbReference>
<feature type="chain" id="PRO_0000063196" description="Caffeic acid 3-O-methyltransferase">
    <location>
        <begin position="1"/>
        <end position="359"/>
    </location>
</feature>
<feature type="region of interest" description="Substrate binding" evidence="1">
    <location>
        <begin position="158"/>
        <end position="176"/>
    </location>
</feature>
<feature type="active site" description="Proton acceptor" evidence="2">
    <location>
        <position position="265"/>
    </location>
</feature>
<feature type="binding site" evidence="1">
    <location>
        <begin position="126"/>
        <end position="132"/>
    </location>
    <ligand>
        <name>substrate</name>
    </ligand>
</feature>
<feature type="binding site" evidence="2">
    <location>
        <position position="204"/>
    </location>
    <ligand>
        <name>S-adenosyl-L-methionine</name>
        <dbReference type="ChEBI" id="CHEBI:59789"/>
    </ligand>
</feature>
<feature type="binding site" evidence="2">
    <location>
        <position position="227"/>
    </location>
    <ligand>
        <name>S-adenosyl-L-methionine</name>
        <dbReference type="ChEBI" id="CHEBI:59789"/>
    </ligand>
</feature>
<feature type="binding site" evidence="2">
    <location>
        <position position="247"/>
    </location>
    <ligand>
        <name>S-adenosyl-L-methionine</name>
        <dbReference type="ChEBI" id="CHEBI:59789"/>
    </ligand>
</feature>
<feature type="binding site" evidence="2">
    <location>
        <position position="248"/>
    </location>
    <ligand>
        <name>S-adenosyl-L-methionine</name>
        <dbReference type="ChEBI" id="CHEBI:59789"/>
    </ligand>
</feature>
<feature type="binding site" evidence="2">
    <location>
        <position position="261"/>
    </location>
    <ligand>
        <name>S-adenosyl-L-methionine</name>
        <dbReference type="ChEBI" id="CHEBI:59789"/>
    </ligand>
</feature>
<feature type="sequence conflict" description="In Ref. 2; AAG43822." evidence="3" ref="2">
    <original>V</original>
    <variation>I</variation>
    <location>
        <position position="71"/>
    </location>
</feature>
<feature type="sequence conflict" description="In Ref. 2; AAG43822." evidence="3" ref="2">
    <original>R</original>
    <variation>G</variation>
    <location>
        <position position="246"/>
    </location>
</feature>
<keyword id="KW-0438">Lignin biosynthesis</keyword>
<keyword id="KW-0489">Methyltransferase</keyword>
<keyword id="KW-0949">S-adenosyl-L-methionine</keyword>
<keyword id="KW-0808">Transferase</keyword>
<proteinExistence type="evidence at transcript level"/>